<keyword id="KW-0963">Cytoplasm</keyword>
<keyword id="KW-0378">Hydrolase</keyword>
<keyword id="KW-1185">Reference proteome</keyword>
<keyword id="KW-0694">RNA-binding</keyword>
<keyword id="KW-0820">tRNA-binding</keyword>
<feature type="chain" id="PRO_0000187794" description="Peptidyl-tRNA hydrolase">
    <location>
        <begin position="1"/>
        <end position="206"/>
    </location>
</feature>
<feature type="active site" description="Proton acceptor" evidence="1">
    <location>
        <position position="24"/>
    </location>
</feature>
<feature type="binding site" evidence="1">
    <location>
        <position position="19"/>
    </location>
    <ligand>
        <name>tRNA</name>
        <dbReference type="ChEBI" id="CHEBI:17843"/>
    </ligand>
</feature>
<feature type="binding site" evidence="1">
    <location>
        <position position="70"/>
    </location>
    <ligand>
        <name>tRNA</name>
        <dbReference type="ChEBI" id="CHEBI:17843"/>
    </ligand>
</feature>
<feature type="binding site" evidence="1">
    <location>
        <position position="72"/>
    </location>
    <ligand>
        <name>tRNA</name>
        <dbReference type="ChEBI" id="CHEBI:17843"/>
    </ligand>
</feature>
<feature type="binding site" evidence="1">
    <location>
        <position position="118"/>
    </location>
    <ligand>
        <name>tRNA</name>
        <dbReference type="ChEBI" id="CHEBI:17843"/>
    </ligand>
</feature>
<feature type="site" description="Discriminates between blocked and unblocked aminoacyl-tRNA" evidence="1">
    <location>
        <position position="14"/>
    </location>
</feature>
<feature type="site" description="Stabilizes the basic form of H active site to accept a proton" evidence="1">
    <location>
        <position position="97"/>
    </location>
</feature>
<sequence>MRPGRLRLLVGLGNPGSKYVGTRHNIGFMALDKLAAQKSVSFRPQTKFHGLMAEVAVGSERVRLLMPQTYMNESGRAIRAAIDWFGLEVDQLLVLVDDMDLSLGRLRLRAQGSAGGHNGLRSAIQHLGTQDFCRLRIGIGAPGCTSEERRARTVSHVLGVFSRQESLLVDQVLDEVLMGLDLIQCLGLERAGNRLNAFQPEGCSAC</sequence>
<proteinExistence type="inferred from homology"/>
<accession>Q7V4V4</accession>
<organism>
    <name type="scientific">Prochlorococcus marinus (strain MIT 9313)</name>
    <dbReference type="NCBI Taxonomy" id="74547"/>
    <lineage>
        <taxon>Bacteria</taxon>
        <taxon>Bacillati</taxon>
        <taxon>Cyanobacteriota</taxon>
        <taxon>Cyanophyceae</taxon>
        <taxon>Synechococcales</taxon>
        <taxon>Prochlorococcaceae</taxon>
        <taxon>Prochlorococcus</taxon>
    </lineage>
</organism>
<gene>
    <name evidence="1" type="primary">pth</name>
    <name type="ordered locus">PMT_1835</name>
</gene>
<reference key="1">
    <citation type="journal article" date="2003" name="Nature">
        <title>Genome divergence in two Prochlorococcus ecotypes reflects oceanic niche differentiation.</title>
        <authorList>
            <person name="Rocap G."/>
            <person name="Larimer F.W."/>
            <person name="Lamerdin J.E."/>
            <person name="Malfatti S."/>
            <person name="Chain P."/>
            <person name="Ahlgren N.A."/>
            <person name="Arellano A."/>
            <person name="Coleman M."/>
            <person name="Hauser L."/>
            <person name="Hess W.R."/>
            <person name="Johnson Z.I."/>
            <person name="Land M.L."/>
            <person name="Lindell D."/>
            <person name="Post A.F."/>
            <person name="Regala W."/>
            <person name="Shah M."/>
            <person name="Shaw S.L."/>
            <person name="Steglich C."/>
            <person name="Sullivan M.B."/>
            <person name="Ting C.S."/>
            <person name="Tolonen A."/>
            <person name="Webb E.A."/>
            <person name="Zinser E.R."/>
            <person name="Chisholm S.W."/>
        </authorList>
    </citation>
    <scope>NUCLEOTIDE SEQUENCE [LARGE SCALE GENOMIC DNA]</scope>
    <source>
        <strain>MIT 9313</strain>
    </source>
</reference>
<dbReference type="EC" id="3.1.1.29" evidence="1"/>
<dbReference type="EMBL" id="BX548175">
    <property type="protein sequence ID" value="CAE22010.1"/>
    <property type="molecule type" value="Genomic_DNA"/>
</dbReference>
<dbReference type="RefSeq" id="WP_011131202.1">
    <property type="nucleotide sequence ID" value="NC_005071.1"/>
</dbReference>
<dbReference type="SMR" id="Q7V4V4"/>
<dbReference type="KEGG" id="pmt:PMT_1835"/>
<dbReference type="eggNOG" id="COG0193">
    <property type="taxonomic scope" value="Bacteria"/>
</dbReference>
<dbReference type="HOGENOM" id="CLU_062456_3_1_3"/>
<dbReference type="OrthoDB" id="9800507at2"/>
<dbReference type="Proteomes" id="UP000001423">
    <property type="component" value="Chromosome"/>
</dbReference>
<dbReference type="GO" id="GO:0005737">
    <property type="term" value="C:cytoplasm"/>
    <property type="evidence" value="ECO:0007669"/>
    <property type="project" value="UniProtKB-SubCell"/>
</dbReference>
<dbReference type="GO" id="GO:0004045">
    <property type="term" value="F:peptidyl-tRNA hydrolase activity"/>
    <property type="evidence" value="ECO:0007669"/>
    <property type="project" value="UniProtKB-UniRule"/>
</dbReference>
<dbReference type="GO" id="GO:0000049">
    <property type="term" value="F:tRNA binding"/>
    <property type="evidence" value="ECO:0007669"/>
    <property type="project" value="UniProtKB-UniRule"/>
</dbReference>
<dbReference type="GO" id="GO:0006515">
    <property type="term" value="P:protein quality control for misfolded or incompletely synthesized proteins"/>
    <property type="evidence" value="ECO:0007669"/>
    <property type="project" value="UniProtKB-UniRule"/>
</dbReference>
<dbReference type="GO" id="GO:0072344">
    <property type="term" value="P:rescue of stalled ribosome"/>
    <property type="evidence" value="ECO:0007669"/>
    <property type="project" value="UniProtKB-UniRule"/>
</dbReference>
<dbReference type="CDD" id="cd00462">
    <property type="entry name" value="PTH"/>
    <property type="match status" value="1"/>
</dbReference>
<dbReference type="FunFam" id="3.40.50.1470:FF:000001">
    <property type="entry name" value="Peptidyl-tRNA hydrolase"/>
    <property type="match status" value="1"/>
</dbReference>
<dbReference type="Gene3D" id="3.40.50.1470">
    <property type="entry name" value="Peptidyl-tRNA hydrolase"/>
    <property type="match status" value="1"/>
</dbReference>
<dbReference type="HAMAP" id="MF_00083">
    <property type="entry name" value="Pept_tRNA_hydro_bact"/>
    <property type="match status" value="1"/>
</dbReference>
<dbReference type="InterPro" id="IPR001328">
    <property type="entry name" value="Pept_tRNA_hydro"/>
</dbReference>
<dbReference type="InterPro" id="IPR018171">
    <property type="entry name" value="Pept_tRNA_hydro_CS"/>
</dbReference>
<dbReference type="InterPro" id="IPR036416">
    <property type="entry name" value="Pept_tRNA_hydro_sf"/>
</dbReference>
<dbReference type="NCBIfam" id="TIGR00447">
    <property type="entry name" value="pth"/>
    <property type="match status" value="1"/>
</dbReference>
<dbReference type="PANTHER" id="PTHR17224">
    <property type="entry name" value="PEPTIDYL-TRNA HYDROLASE"/>
    <property type="match status" value="1"/>
</dbReference>
<dbReference type="PANTHER" id="PTHR17224:SF1">
    <property type="entry name" value="PEPTIDYL-TRNA HYDROLASE"/>
    <property type="match status" value="1"/>
</dbReference>
<dbReference type="Pfam" id="PF01195">
    <property type="entry name" value="Pept_tRNA_hydro"/>
    <property type="match status" value="1"/>
</dbReference>
<dbReference type="SUPFAM" id="SSF53178">
    <property type="entry name" value="Peptidyl-tRNA hydrolase-like"/>
    <property type="match status" value="1"/>
</dbReference>
<dbReference type="PROSITE" id="PS01195">
    <property type="entry name" value="PEPT_TRNA_HYDROL_1"/>
    <property type="match status" value="1"/>
</dbReference>
<protein>
    <recommendedName>
        <fullName evidence="1">Peptidyl-tRNA hydrolase</fullName>
        <shortName evidence="1">Pth</shortName>
        <ecNumber evidence="1">3.1.1.29</ecNumber>
    </recommendedName>
</protein>
<name>PTH_PROMM</name>
<comment type="function">
    <text evidence="1">Hydrolyzes ribosome-free peptidyl-tRNAs (with 1 or more amino acids incorporated), which drop off the ribosome during protein synthesis, or as a result of ribosome stalling.</text>
</comment>
<comment type="function">
    <text evidence="1">Catalyzes the release of premature peptidyl moieties from peptidyl-tRNA molecules trapped in stalled 50S ribosomal subunits, and thus maintains levels of free tRNAs and 50S ribosomes.</text>
</comment>
<comment type="catalytic activity">
    <reaction evidence="1">
        <text>an N-acyl-L-alpha-aminoacyl-tRNA + H2O = an N-acyl-L-amino acid + a tRNA + H(+)</text>
        <dbReference type="Rhea" id="RHEA:54448"/>
        <dbReference type="Rhea" id="RHEA-COMP:10123"/>
        <dbReference type="Rhea" id="RHEA-COMP:13883"/>
        <dbReference type="ChEBI" id="CHEBI:15377"/>
        <dbReference type="ChEBI" id="CHEBI:15378"/>
        <dbReference type="ChEBI" id="CHEBI:59874"/>
        <dbReference type="ChEBI" id="CHEBI:78442"/>
        <dbReference type="ChEBI" id="CHEBI:138191"/>
        <dbReference type="EC" id="3.1.1.29"/>
    </reaction>
</comment>
<comment type="subunit">
    <text evidence="1">Monomer.</text>
</comment>
<comment type="subcellular location">
    <subcellularLocation>
        <location evidence="1">Cytoplasm</location>
    </subcellularLocation>
</comment>
<comment type="similarity">
    <text evidence="1">Belongs to the PTH family.</text>
</comment>
<evidence type="ECO:0000255" key="1">
    <source>
        <dbReference type="HAMAP-Rule" id="MF_00083"/>
    </source>
</evidence>